<comment type="function">
    <text evidence="1">Catalyzes the phosphorylation of the hydroxyl group of 4-methyl-5-beta-hydroxyethylthiazole (THZ).</text>
</comment>
<comment type="catalytic activity">
    <reaction evidence="1">
        <text>5-(2-hydroxyethyl)-4-methylthiazole + ATP = 4-methyl-5-(2-phosphooxyethyl)-thiazole + ADP + H(+)</text>
        <dbReference type="Rhea" id="RHEA:24212"/>
        <dbReference type="ChEBI" id="CHEBI:15378"/>
        <dbReference type="ChEBI" id="CHEBI:17957"/>
        <dbReference type="ChEBI" id="CHEBI:30616"/>
        <dbReference type="ChEBI" id="CHEBI:58296"/>
        <dbReference type="ChEBI" id="CHEBI:456216"/>
        <dbReference type="EC" id="2.7.1.50"/>
    </reaction>
</comment>
<comment type="cofactor">
    <cofactor evidence="1">
        <name>Mg(2+)</name>
        <dbReference type="ChEBI" id="CHEBI:18420"/>
    </cofactor>
</comment>
<comment type="pathway">
    <text evidence="1">Cofactor biosynthesis; thiamine diphosphate biosynthesis; 4-methyl-5-(2-phosphoethyl)-thiazole from 5-(2-hydroxyethyl)-4-methylthiazole: step 1/1.</text>
</comment>
<comment type="similarity">
    <text evidence="1">Belongs to the Thz kinase family.</text>
</comment>
<reference key="1">
    <citation type="journal article" date="2002" name="J. Mol. Microbiol. Biotechnol.">
        <title>The genome of Methanosarcina mazei: evidence for lateral gene transfer between Bacteria and Archaea.</title>
        <authorList>
            <person name="Deppenmeier U."/>
            <person name="Johann A."/>
            <person name="Hartsch T."/>
            <person name="Merkl R."/>
            <person name="Schmitz R.A."/>
            <person name="Martinez-Arias R."/>
            <person name="Henne A."/>
            <person name="Wiezer A."/>
            <person name="Baeumer S."/>
            <person name="Jacobi C."/>
            <person name="Brueggemann H."/>
            <person name="Lienard T."/>
            <person name="Christmann A."/>
            <person name="Boemecke M."/>
            <person name="Steckel S."/>
            <person name="Bhattacharyya A."/>
            <person name="Lykidis A."/>
            <person name="Overbeek R."/>
            <person name="Klenk H.-P."/>
            <person name="Gunsalus R.P."/>
            <person name="Fritz H.-J."/>
            <person name="Gottschalk G."/>
        </authorList>
    </citation>
    <scope>NUCLEOTIDE SEQUENCE [LARGE SCALE GENOMIC DNA]</scope>
    <source>
        <strain>ATCC BAA-159 / DSM 3647 / Goe1 / Go1 / JCM 11833 / OCM 88</strain>
    </source>
</reference>
<keyword id="KW-0067">ATP-binding</keyword>
<keyword id="KW-0418">Kinase</keyword>
<keyword id="KW-0460">Magnesium</keyword>
<keyword id="KW-0479">Metal-binding</keyword>
<keyword id="KW-0547">Nucleotide-binding</keyword>
<keyword id="KW-0784">Thiamine biosynthesis</keyword>
<keyword id="KW-0808">Transferase</keyword>
<proteinExistence type="inferred from homology"/>
<dbReference type="EC" id="2.7.1.50" evidence="1"/>
<dbReference type="EMBL" id="AE008384">
    <property type="protein sequence ID" value="AAM32930.1"/>
    <property type="molecule type" value="Genomic_DNA"/>
</dbReference>
<dbReference type="RefSeq" id="WP_011035127.1">
    <property type="nucleotide sequence ID" value="NC_003901.1"/>
</dbReference>
<dbReference type="SMR" id="Q8PS50"/>
<dbReference type="GeneID" id="82162336"/>
<dbReference type="KEGG" id="mma:MM_3234"/>
<dbReference type="PATRIC" id="fig|192952.21.peg.3759"/>
<dbReference type="eggNOG" id="arCOG00019">
    <property type="taxonomic scope" value="Archaea"/>
</dbReference>
<dbReference type="HOGENOM" id="CLU_019943_0_1_2"/>
<dbReference type="UniPathway" id="UPA00060">
    <property type="reaction ID" value="UER00139"/>
</dbReference>
<dbReference type="Proteomes" id="UP000000595">
    <property type="component" value="Chromosome"/>
</dbReference>
<dbReference type="GO" id="GO:0005524">
    <property type="term" value="F:ATP binding"/>
    <property type="evidence" value="ECO:0007669"/>
    <property type="project" value="UniProtKB-UniRule"/>
</dbReference>
<dbReference type="GO" id="GO:0004417">
    <property type="term" value="F:hydroxyethylthiazole kinase activity"/>
    <property type="evidence" value="ECO:0007669"/>
    <property type="project" value="UniProtKB-UniRule"/>
</dbReference>
<dbReference type="GO" id="GO:0000287">
    <property type="term" value="F:magnesium ion binding"/>
    <property type="evidence" value="ECO:0007669"/>
    <property type="project" value="UniProtKB-UniRule"/>
</dbReference>
<dbReference type="GO" id="GO:0009228">
    <property type="term" value="P:thiamine biosynthetic process"/>
    <property type="evidence" value="ECO:0007669"/>
    <property type="project" value="UniProtKB-KW"/>
</dbReference>
<dbReference type="GO" id="GO:0009229">
    <property type="term" value="P:thiamine diphosphate biosynthetic process"/>
    <property type="evidence" value="ECO:0007669"/>
    <property type="project" value="UniProtKB-UniRule"/>
</dbReference>
<dbReference type="CDD" id="cd01170">
    <property type="entry name" value="THZ_kinase"/>
    <property type="match status" value="1"/>
</dbReference>
<dbReference type="Gene3D" id="3.40.1190.20">
    <property type="match status" value="1"/>
</dbReference>
<dbReference type="HAMAP" id="MF_00228">
    <property type="entry name" value="Thz_kinase"/>
    <property type="match status" value="1"/>
</dbReference>
<dbReference type="InterPro" id="IPR000417">
    <property type="entry name" value="Hyethyz_kinase"/>
</dbReference>
<dbReference type="InterPro" id="IPR029056">
    <property type="entry name" value="Ribokinase-like"/>
</dbReference>
<dbReference type="NCBIfam" id="NF006830">
    <property type="entry name" value="PRK09355.1"/>
    <property type="match status" value="1"/>
</dbReference>
<dbReference type="NCBIfam" id="TIGR00694">
    <property type="entry name" value="thiM"/>
    <property type="match status" value="1"/>
</dbReference>
<dbReference type="Pfam" id="PF02110">
    <property type="entry name" value="HK"/>
    <property type="match status" value="1"/>
</dbReference>
<dbReference type="PIRSF" id="PIRSF000513">
    <property type="entry name" value="Thz_kinase"/>
    <property type="match status" value="1"/>
</dbReference>
<dbReference type="PRINTS" id="PR01099">
    <property type="entry name" value="HYETHTZKNASE"/>
</dbReference>
<dbReference type="SUPFAM" id="SSF53613">
    <property type="entry name" value="Ribokinase-like"/>
    <property type="match status" value="1"/>
</dbReference>
<accession>Q8PS50</accession>
<protein>
    <recommendedName>
        <fullName evidence="1">Hydroxyethylthiazole kinase</fullName>
        <ecNumber evidence="1">2.7.1.50</ecNumber>
    </recommendedName>
    <alternativeName>
        <fullName evidence="1">4-methyl-5-beta-hydroxyethylthiazole kinase</fullName>
        <shortName evidence="1">TH kinase</shortName>
        <shortName evidence="1">Thz kinase</shortName>
    </alternativeName>
</protein>
<name>THIM_METMA</name>
<evidence type="ECO:0000255" key="1">
    <source>
        <dbReference type="HAMAP-Rule" id="MF_00228"/>
    </source>
</evidence>
<gene>
    <name evidence="1" type="primary">thiM</name>
    <name type="ordered locus">MM_3234</name>
</gene>
<organism>
    <name type="scientific">Methanosarcina mazei (strain ATCC BAA-159 / DSM 3647 / Goe1 / Go1 / JCM 11833 / OCM 88)</name>
    <name type="common">Methanosarcina frisia</name>
    <dbReference type="NCBI Taxonomy" id="192952"/>
    <lineage>
        <taxon>Archaea</taxon>
        <taxon>Methanobacteriati</taxon>
        <taxon>Methanobacteriota</taxon>
        <taxon>Stenosarchaea group</taxon>
        <taxon>Methanomicrobia</taxon>
        <taxon>Methanosarcinales</taxon>
        <taxon>Methanosarcinaceae</taxon>
        <taxon>Methanosarcina</taxon>
    </lineage>
</organism>
<sequence length="261" mass="27555">MKNPLKTIRETKPLVHHITNWVTIYDCANITRAFGALPVMAHAPEECADMTGISSALVLNIGTLTSEIIDSMLLSAAAANKKKIPVVLDAVGVGATRFRDEMAAKILGSVRVDIIKGNYSEIAKLAGENAETKGVESTSISADPQKVAKEFAKSSSSVVVMTGKEDVISDGNRTFVVKNGHELMGSIVGTGCMAASIIGSFASVNPDYCDAAKDALCYFGAAGELAAKNSAGPGSFKVNLYDEVFNLSDEKVQAMMKVEEL</sequence>
<feature type="chain" id="PRO_0000156969" description="Hydroxyethylthiazole kinase">
    <location>
        <begin position="1"/>
        <end position="261"/>
    </location>
</feature>
<feature type="binding site" evidence="1">
    <location>
        <position position="40"/>
    </location>
    <ligand>
        <name>substrate</name>
    </ligand>
</feature>
<feature type="binding site" evidence="1">
    <location>
        <position position="116"/>
    </location>
    <ligand>
        <name>ATP</name>
        <dbReference type="ChEBI" id="CHEBI:30616"/>
    </ligand>
</feature>
<feature type="binding site" evidence="1">
    <location>
        <position position="162"/>
    </location>
    <ligand>
        <name>ATP</name>
        <dbReference type="ChEBI" id="CHEBI:30616"/>
    </ligand>
</feature>
<feature type="binding site" evidence="1">
    <location>
        <position position="189"/>
    </location>
    <ligand>
        <name>substrate</name>
    </ligand>
</feature>